<proteinExistence type="inferred from homology"/>
<accession>P28045</accession>
<dbReference type="PIR" id="A38487">
    <property type="entry name" value="A38487"/>
</dbReference>
<dbReference type="SMR" id="P28045"/>
<dbReference type="GO" id="GO:0009295">
    <property type="term" value="C:nucleoid"/>
    <property type="evidence" value="ECO:0007669"/>
    <property type="project" value="TreeGrafter"/>
</dbReference>
<dbReference type="GO" id="GO:0003697">
    <property type="term" value="F:single-stranded DNA binding"/>
    <property type="evidence" value="ECO:0007669"/>
    <property type="project" value="UniProtKB-UniRule"/>
</dbReference>
<dbReference type="GO" id="GO:0006260">
    <property type="term" value="P:DNA replication"/>
    <property type="evidence" value="ECO:0007669"/>
    <property type="project" value="UniProtKB-KW"/>
</dbReference>
<dbReference type="CDD" id="cd04496">
    <property type="entry name" value="SSB_OBF"/>
    <property type="match status" value="1"/>
</dbReference>
<dbReference type="Gene3D" id="2.40.50.140">
    <property type="entry name" value="Nucleic acid-binding proteins"/>
    <property type="match status" value="1"/>
</dbReference>
<dbReference type="HAMAP" id="MF_00984">
    <property type="entry name" value="SSB"/>
    <property type="match status" value="1"/>
</dbReference>
<dbReference type="InterPro" id="IPR012340">
    <property type="entry name" value="NA-bd_OB-fold"/>
</dbReference>
<dbReference type="InterPro" id="IPR000424">
    <property type="entry name" value="Primosome_PriB/ssb"/>
</dbReference>
<dbReference type="InterPro" id="IPR011344">
    <property type="entry name" value="ssDNA-bd"/>
</dbReference>
<dbReference type="NCBIfam" id="NF010292">
    <property type="entry name" value="PRK13732.1"/>
    <property type="match status" value="1"/>
</dbReference>
<dbReference type="NCBIfam" id="TIGR00621">
    <property type="entry name" value="ssb"/>
    <property type="match status" value="1"/>
</dbReference>
<dbReference type="PANTHER" id="PTHR10302">
    <property type="entry name" value="SINGLE-STRANDED DNA-BINDING PROTEIN"/>
    <property type="match status" value="1"/>
</dbReference>
<dbReference type="PANTHER" id="PTHR10302:SF27">
    <property type="entry name" value="SINGLE-STRANDED DNA-BINDING PROTEIN"/>
    <property type="match status" value="1"/>
</dbReference>
<dbReference type="Pfam" id="PF00436">
    <property type="entry name" value="SSB"/>
    <property type="match status" value="1"/>
</dbReference>
<dbReference type="SUPFAM" id="SSF50249">
    <property type="entry name" value="Nucleic acid-binding proteins"/>
    <property type="match status" value="1"/>
</dbReference>
<dbReference type="PROSITE" id="PS50935">
    <property type="entry name" value="SSB"/>
    <property type="match status" value="1"/>
</dbReference>
<comment type="function">
    <text evidence="4">May contribute to the conjugative processing of DNA. It has a functional relationship with Psi (plasmid-mediated sos inhibition) proteins.</text>
</comment>
<comment type="subunit">
    <text evidence="2">Homotetramer.</text>
</comment>
<evidence type="ECO:0000250" key="1"/>
<evidence type="ECO:0000255" key="2">
    <source>
        <dbReference type="HAMAP-Rule" id="MF_00984"/>
    </source>
</evidence>
<evidence type="ECO:0000256" key="3">
    <source>
        <dbReference type="SAM" id="MobiDB-lite"/>
    </source>
</evidence>
<evidence type="ECO:0000269" key="4">
    <source>
    </source>
</evidence>
<reference key="1">
    <citation type="journal article" date="1991" name="Proteins">
        <title>Single-stranded DNA binding proteins (SSBs) from prokaryotic transmissible plasmids.</title>
        <authorList>
            <person name="Ruvolo P.P."/>
            <person name="Keating K.M."/>
            <person name="Williams K.R."/>
            <person name="Chase J.W."/>
        </authorList>
    </citation>
    <scope>NUCLEOTIDE SEQUENCE [GENOMIC DNA]</scope>
    <scope>FUNCTION</scope>
</reference>
<protein>
    <recommendedName>
        <fullName>Plasmid-derived single-stranded DNA-binding protein</fullName>
        <shortName evidence="2">SSB</shortName>
    </recommendedName>
    <alternativeName>
        <fullName>Helix-destabilizing protein</fullName>
    </alternativeName>
</protein>
<geneLocation type="plasmid">
    <name>IncI1 R64</name>
</geneLocation>
<keyword id="KW-0235">DNA replication</keyword>
<keyword id="KW-0238">DNA-binding</keyword>
<keyword id="KW-0614">Plasmid</keyword>
<sequence length="175" mass="19313">MSARGINKVILVGRLGNDPEVRYIPNGGAVANLQVATSESWRDKQTGEMREQTEWHRVVLFGKLAEVAGEYLRKGAQVYIEGQLRTRSWDDNGITRYITEILVKTTGTMQMLGSAPQQNAQAQPKPQQNGQPQSADATKKGGAKTKGRERKAAQPEPQPQTPEGEDYGFSDDIPF</sequence>
<name>SSBR_ECOLX</name>
<feature type="initiator methionine" description="Removed" evidence="1">
    <location>
        <position position="1"/>
    </location>
</feature>
<feature type="chain" id="PRO_0000096044" description="Plasmid-derived single-stranded DNA-binding protein">
    <location>
        <begin position="2"/>
        <end position="175"/>
    </location>
</feature>
<feature type="domain" description="SSB" evidence="2">
    <location>
        <begin position="6"/>
        <end position="110"/>
    </location>
</feature>
<feature type="DNA-binding region" evidence="2">
    <location>
        <begin position="55"/>
        <end position="61"/>
    </location>
</feature>
<feature type="region of interest" description="Disordered" evidence="3">
    <location>
        <begin position="114"/>
        <end position="175"/>
    </location>
</feature>
<feature type="compositionally biased region" description="Low complexity" evidence="3">
    <location>
        <begin position="115"/>
        <end position="136"/>
    </location>
</feature>
<feature type="compositionally biased region" description="Acidic residues" evidence="3">
    <location>
        <begin position="163"/>
        <end position="175"/>
    </location>
</feature>
<gene>
    <name type="primary">ssb</name>
</gene>
<organism>
    <name type="scientific">Escherichia coli</name>
    <dbReference type="NCBI Taxonomy" id="562"/>
    <lineage>
        <taxon>Bacteria</taxon>
        <taxon>Pseudomonadati</taxon>
        <taxon>Pseudomonadota</taxon>
        <taxon>Gammaproteobacteria</taxon>
        <taxon>Enterobacterales</taxon>
        <taxon>Enterobacteriaceae</taxon>
        <taxon>Escherichia</taxon>
    </lineage>
</organism>